<reference key="1">
    <citation type="journal article" date="2002" name="Nat. Neurosci.">
        <title>The olfactory receptor gene superfamily of the mouse.</title>
        <authorList>
            <person name="Zhang X."/>
            <person name="Firestein S."/>
        </authorList>
    </citation>
    <scope>NUCLEOTIDE SEQUENCE [GENOMIC DNA]</scope>
</reference>
<reference key="2">
    <citation type="journal article" date="2002" name="Hum. Mol. Genet.">
        <title>Different evolutionary processes shaped the mouse and human olfactory receptor gene families.</title>
        <authorList>
            <person name="Young J.M."/>
            <person name="Friedman C."/>
            <person name="Williams E.M."/>
            <person name="Ross J.A."/>
            <person name="Tonnes-Priddy L."/>
            <person name="Trask B.J."/>
        </authorList>
    </citation>
    <scope>NUCLEOTIDE SEQUENCE [GENOMIC DNA]</scope>
</reference>
<reference key="3">
    <citation type="journal article" date="2002" name="Hum. Mol. Genet.">
        <authorList>
            <person name="Young J.M."/>
            <person name="Friedman C."/>
            <person name="Williams E.M."/>
            <person name="Ross J.A."/>
            <person name="Tonnes-Priddy L."/>
            <person name="Trask B.J."/>
        </authorList>
    </citation>
    <scope>ERRATUM OF PUBMED:11875048</scope>
</reference>
<feature type="chain" id="PRO_0000150833" description="Olfactory receptor 5P53">
    <location>
        <begin position="1"/>
        <end position="310"/>
    </location>
</feature>
<feature type="topological domain" description="Extracellular" evidence="1">
    <location>
        <begin position="1"/>
        <end position="25"/>
    </location>
</feature>
<feature type="transmembrane region" description="Helical; Name=1" evidence="1">
    <location>
        <begin position="26"/>
        <end position="46"/>
    </location>
</feature>
<feature type="topological domain" description="Cytoplasmic" evidence="1">
    <location>
        <begin position="47"/>
        <end position="54"/>
    </location>
</feature>
<feature type="transmembrane region" description="Helical; Name=2" evidence="1">
    <location>
        <begin position="55"/>
        <end position="75"/>
    </location>
</feature>
<feature type="topological domain" description="Extracellular" evidence="1">
    <location>
        <begin position="76"/>
        <end position="99"/>
    </location>
</feature>
<feature type="transmembrane region" description="Helical; Name=3" evidence="1">
    <location>
        <begin position="100"/>
        <end position="120"/>
    </location>
</feature>
<feature type="topological domain" description="Cytoplasmic" evidence="1">
    <location>
        <begin position="121"/>
        <end position="133"/>
    </location>
</feature>
<feature type="transmembrane region" description="Helical; Name=4" evidence="1">
    <location>
        <begin position="134"/>
        <end position="154"/>
    </location>
</feature>
<feature type="topological domain" description="Extracellular" evidence="1">
    <location>
        <begin position="155"/>
        <end position="196"/>
    </location>
</feature>
<feature type="transmembrane region" description="Helical; Name=5" evidence="1">
    <location>
        <begin position="197"/>
        <end position="217"/>
    </location>
</feature>
<feature type="topological domain" description="Cytoplasmic" evidence="1">
    <location>
        <begin position="218"/>
        <end position="237"/>
    </location>
</feature>
<feature type="transmembrane region" description="Helical; Name=6" evidence="1">
    <location>
        <begin position="238"/>
        <end position="258"/>
    </location>
</feature>
<feature type="topological domain" description="Extracellular" evidence="1">
    <location>
        <begin position="259"/>
        <end position="271"/>
    </location>
</feature>
<feature type="transmembrane region" description="Helical; Name=7" evidence="1">
    <location>
        <begin position="272"/>
        <end position="292"/>
    </location>
</feature>
<feature type="topological domain" description="Cytoplasmic" evidence="1">
    <location>
        <begin position="293"/>
        <end position="310"/>
    </location>
</feature>
<feature type="glycosylation site" description="N-linked (GlcNAc...) asparagine" evidence="1">
    <location>
        <position position="5"/>
    </location>
</feature>
<feature type="glycosylation site" description="N-linked (GlcNAc...) asparagine" evidence="1">
    <location>
        <position position="265"/>
    </location>
</feature>
<feature type="disulfide bond" evidence="2">
    <location>
        <begin position="97"/>
        <end position="189"/>
    </location>
</feature>
<name>O5P53_MOUSE</name>
<proteinExistence type="inferred from homology"/>
<evidence type="ECO:0000255" key="1"/>
<evidence type="ECO:0000255" key="2">
    <source>
        <dbReference type="PROSITE-ProRule" id="PRU00521"/>
    </source>
</evidence>
<evidence type="ECO:0000305" key="3"/>
<evidence type="ECO:0000312" key="4">
    <source>
        <dbReference type="MGI" id="MGI:3030307"/>
    </source>
</evidence>
<comment type="function">
    <text>Potential odorant receptor.</text>
</comment>
<comment type="subcellular location">
    <subcellularLocation>
        <location evidence="3">Cell membrane</location>
        <topology evidence="1">Multi-pass membrane protein</topology>
    </subcellularLocation>
</comment>
<comment type="similarity">
    <text evidence="2">Belongs to the G-protein coupled receptor 1 family.</text>
</comment>
<accession>Q8VG44</accession>
<sequence length="310" mass="34187">MEAENHTTVAELIILGLTEDPKLCIVFFVIFLGVYIVTLVGNISIITLIRISSQLHTPMYLFLSHLAFVDILYSTSVSVIMHMELLGHGLALPVAACAAQLCITVSFGSAECFLLAAMAYDRYVAICSPLLYSTLMSPRVCFLLLGMSYVGGCMNGWTFTGCLLSLSFCGPNQIDHFFCDFSPLLKLSCSDVSIIGIIPSISSGSIIVVTVFVIAVSYIYILITILNMRSTEGRHKAFSTCTSHLTAVTLYYGTITFIYVMPKSNYSTEQNKVLSVFYTVVIPMLNPLIYSLRNRDVKEALRKATVRVYS</sequence>
<dbReference type="EMBL" id="AY073319">
    <property type="protein sequence ID" value="AAL60982.1"/>
    <property type="molecule type" value="Genomic_DNA"/>
</dbReference>
<dbReference type="EMBL" id="AY317581">
    <property type="protein sequence ID" value="AAP70978.1"/>
    <property type="molecule type" value="Genomic_DNA"/>
</dbReference>
<dbReference type="CCDS" id="CCDS21696.1"/>
<dbReference type="RefSeq" id="NP_666986.1">
    <property type="nucleotide sequence ID" value="NM_146775.1"/>
</dbReference>
<dbReference type="SMR" id="Q8VG44"/>
<dbReference type="FunCoup" id="Q8VG44">
    <property type="interactions" value="1130"/>
</dbReference>
<dbReference type="STRING" id="10090.ENSMUSP00000150610"/>
<dbReference type="GlyCosmos" id="Q8VG44">
    <property type="glycosylation" value="2 sites, No reported glycans"/>
</dbReference>
<dbReference type="GlyGen" id="Q8VG44">
    <property type="glycosylation" value="2 sites"/>
</dbReference>
<dbReference type="iPTMnet" id="Q8VG44"/>
<dbReference type="PhosphoSitePlus" id="Q8VG44"/>
<dbReference type="PaxDb" id="10090-ENSMUSP00000081816"/>
<dbReference type="Ensembl" id="ENSMUST00000084761.2">
    <property type="protein sequence ID" value="ENSMUSP00000081816.2"/>
    <property type="gene ID" value="ENSMUSG00000095212.5"/>
</dbReference>
<dbReference type="Ensembl" id="ENSMUST00000217618.3">
    <property type="protein sequence ID" value="ENSMUSP00000150610.2"/>
    <property type="gene ID" value="ENSMUSG00000095212.5"/>
</dbReference>
<dbReference type="GeneID" id="258771"/>
<dbReference type="KEGG" id="mmu:258771"/>
<dbReference type="UCSC" id="uc009jbp.1">
    <property type="organism name" value="mouse"/>
</dbReference>
<dbReference type="AGR" id="MGI:3030307"/>
<dbReference type="CTD" id="258771"/>
<dbReference type="MGI" id="MGI:3030307">
    <property type="gene designation" value="Or5p53"/>
</dbReference>
<dbReference type="VEuPathDB" id="HostDB:ENSMUSG00000095212"/>
<dbReference type="eggNOG" id="ENOG502SKA1">
    <property type="taxonomic scope" value="Eukaryota"/>
</dbReference>
<dbReference type="GeneTree" id="ENSGT01130000278279"/>
<dbReference type="HOGENOM" id="CLU_012526_1_0_1"/>
<dbReference type="InParanoid" id="Q8VG44"/>
<dbReference type="OMA" id="DITSXXX"/>
<dbReference type="OrthoDB" id="9598168at2759"/>
<dbReference type="PhylomeDB" id="Q8VG44"/>
<dbReference type="TreeFam" id="TF338848"/>
<dbReference type="BioGRID-ORCS" id="258771">
    <property type="hits" value="1 hit in 37 CRISPR screens"/>
</dbReference>
<dbReference type="PRO" id="PR:Q8VG44"/>
<dbReference type="Proteomes" id="UP000000589">
    <property type="component" value="Chromosome 7"/>
</dbReference>
<dbReference type="RNAct" id="Q8VG44">
    <property type="molecule type" value="protein"/>
</dbReference>
<dbReference type="GO" id="GO:0016020">
    <property type="term" value="C:membrane"/>
    <property type="evidence" value="ECO:0000247"/>
    <property type="project" value="MGI"/>
</dbReference>
<dbReference type="GO" id="GO:0005886">
    <property type="term" value="C:plasma membrane"/>
    <property type="evidence" value="ECO:0007669"/>
    <property type="project" value="UniProtKB-SubCell"/>
</dbReference>
<dbReference type="GO" id="GO:0004930">
    <property type="term" value="F:G protein-coupled receptor activity"/>
    <property type="evidence" value="ECO:0007669"/>
    <property type="project" value="UniProtKB-KW"/>
</dbReference>
<dbReference type="GO" id="GO:0004984">
    <property type="term" value="F:olfactory receptor activity"/>
    <property type="evidence" value="ECO:0000247"/>
    <property type="project" value="MGI"/>
</dbReference>
<dbReference type="GO" id="GO:0007186">
    <property type="term" value="P:G protein-coupled receptor signaling pathway"/>
    <property type="evidence" value="ECO:0000247"/>
    <property type="project" value="MGI"/>
</dbReference>
<dbReference type="GO" id="GO:0007608">
    <property type="term" value="P:sensory perception of smell"/>
    <property type="evidence" value="ECO:0000247"/>
    <property type="project" value="MGI"/>
</dbReference>
<dbReference type="FunFam" id="1.20.1070.10:FF:000004">
    <property type="entry name" value="Olfactory receptor"/>
    <property type="match status" value="1"/>
</dbReference>
<dbReference type="Gene3D" id="1.20.1070.10">
    <property type="entry name" value="Rhodopsin 7-helix transmembrane proteins"/>
    <property type="match status" value="1"/>
</dbReference>
<dbReference type="InterPro" id="IPR000276">
    <property type="entry name" value="GPCR_Rhodpsn"/>
</dbReference>
<dbReference type="InterPro" id="IPR017452">
    <property type="entry name" value="GPCR_Rhodpsn_7TM"/>
</dbReference>
<dbReference type="InterPro" id="IPR000725">
    <property type="entry name" value="Olfact_rcpt"/>
</dbReference>
<dbReference type="PANTHER" id="PTHR48018">
    <property type="entry name" value="OLFACTORY RECEPTOR"/>
    <property type="match status" value="1"/>
</dbReference>
<dbReference type="Pfam" id="PF13853">
    <property type="entry name" value="7tm_4"/>
    <property type="match status" value="1"/>
</dbReference>
<dbReference type="PRINTS" id="PR00237">
    <property type="entry name" value="GPCRRHODOPSN"/>
</dbReference>
<dbReference type="PRINTS" id="PR00245">
    <property type="entry name" value="OLFACTORYR"/>
</dbReference>
<dbReference type="SUPFAM" id="SSF81321">
    <property type="entry name" value="Family A G protein-coupled receptor-like"/>
    <property type="match status" value="1"/>
</dbReference>
<dbReference type="PROSITE" id="PS00237">
    <property type="entry name" value="G_PROTEIN_RECEP_F1_1"/>
    <property type="match status" value="1"/>
</dbReference>
<dbReference type="PROSITE" id="PS50262">
    <property type="entry name" value="G_PROTEIN_RECEP_F1_2"/>
    <property type="match status" value="1"/>
</dbReference>
<gene>
    <name evidence="4" type="primary">Or5p53</name>
    <name evidence="4" type="synonym">Mor204-4</name>
    <name evidence="4" type="synonym">Olfr473</name>
</gene>
<protein>
    <recommendedName>
        <fullName evidence="3">Olfactory receptor 5P53</fullName>
    </recommendedName>
    <alternativeName>
        <fullName>Olfactory receptor 204-4</fullName>
    </alternativeName>
    <alternativeName>
        <fullName>Olfactory receptor 473</fullName>
    </alternativeName>
</protein>
<keyword id="KW-1003">Cell membrane</keyword>
<keyword id="KW-1015">Disulfide bond</keyword>
<keyword id="KW-0297">G-protein coupled receptor</keyword>
<keyword id="KW-0325">Glycoprotein</keyword>
<keyword id="KW-0472">Membrane</keyword>
<keyword id="KW-0552">Olfaction</keyword>
<keyword id="KW-0675">Receptor</keyword>
<keyword id="KW-1185">Reference proteome</keyword>
<keyword id="KW-0716">Sensory transduction</keyword>
<keyword id="KW-0807">Transducer</keyword>
<keyword id="KW-0812">Transmembrane</keyword>
<keyword id="KW-1133">Transmembrane helix</keyword>
<organism>
    <name type="scientific">Mus musculus</name>
    <name type="common">Mouse</name>
    <dbReference type="NCBI Taxonomy" id="10090"/>
    <lineage>
        <taxon>Eukaryota</taxon>
        <taxon>Metazoa</taxon>
        <taxon>Chordata</taxon>
        <taxon>Craniata</taxon>
        <taxon>Vertebrata</taxon>
        <taxon>Euteleostomi</taxon>
        <taxon>Mammalia</taxon>
        <taxon>Eutheria</taxon>
        <taxon>Euarchontoglires</taxon>
        <taxon>Glires</taxon>
        <taxon>Rodentia</taxon>
        <taxon>Myomorpha</taxon>
        <taxon>Muroidea</taxon>
        <taxon>Muridae</taxon>
        <taxon>Murinae</taxon>
        <taxon>Mus</taxon>
        <taxon>Mus</taxon>
    </lineage>
</organism>